<evidence type="ECO:0000250" key="1"/>
<evidence type="ECO:0000250" key="2">
    <source>
        <dbReference type="UniProtKB" id="P07371"/>
    </source>
</evidence>
<evidence type="ECO:0000250" key="3">
    <source>
        <dbReference type="UniProtKB" id="P12333"/>
    </source>
</evidence>
<evidence type="ECO:0000255" key="4"/>
<evidence type="ECO:0000256" key="5">
    <source>
        <dbReference type="SAM" id="MobiDB-lite"/>
    </source>
</evidence>
<evidence type="ECO:0000269" key="6">
    <source>
    </source>
</evidence>
<evidence type="ECO:0000305" key="7"/>
<evidence type="ECO:0007829" key="8">
    <source>
        <dbReference type="PDB" id="5XNL"/>
    </source>
</evidence>
<organism>
    <name type="scientific">Pisum sativum</name>
    <name type="common">Garden pea</name>
    <name type="synonym">Lathyrus oleraceus</name>
    <dbReference type="NCBI Taxonomy" id="3888"/>
    <lineage>
        <taxon>Eukaryota</taxon>
        <taxon>Viridiplantae</taxon>
        <taxon>Streptophyta</taxon>
        <taxon>Embryophyta</taxon>
        <taxon>Tracheophyta</taxon>
        <taxon>Spermatophyta</taxon>
        <taxon>Magnoliopsida</taxon>
        <taxon>eudicotyledons</taxon>
        <taxon>Gunneridae</taxon>
        <taxon>Pentapetalae</taxon>
        <taxon>rosids</taxon>
        <taxon>fabids</taxon>
        <taxon>Fabales</taxon>
        <taxon>Fabaceae</taxon>
        <taxon>Papilionoideae</taxon>
        <taxon>50 kb inversion clade</taxon>
        <taxon>NPAAA clade</taxon>
        <taxon>Hologalegina</taxon>
        <taxon>IRL clade</taxon>
        <taxon>Fabeae</taxon>
        <taxon>Pisum</taxon>
    </lineage>
</organism>
<accession>P27490</accession>
<accession>P35389</accession>
<accession>Q5I8X3</accession>
<feature type="transit peptide" description="Chloroplast" evidence="4">
    <location>
        <begin position="1"/>
        <end position="36"/>
    </location>
</feature>
<feature type="chain" id="PRO_0000003681" description="Chlorophyll a-b binding protein 8, chloroplastic">
    <location>
        <begin position="37"/>
        <end position="268"/>
    </location>
</feature>
<feature type="transmembrane region" description="Helical" evidence="4">
    <location>
        <begin position="102"/>
        <end position="122"/>
    </location>
</feature>
<feature type="transmembrane region" description="Helical" evidence="4">
    <location>
        <begin position="154"/>
        <end position="174"/>
    </location>
</feature>
<feature type="transmembrane region" description="Helical" evidence="4">
    <location>
        <begin position="222"/>
        <end position="242"/>
    </location>
</feature>
<feature type="region of interest" description="Disordered" evidence="5">
    <location>
        <begin position="1"/>
        <end position="31"/>
    </location>
</feature>
<feature type="compositionally biased region" description="Polar residues" evidence="5">
    <location>
        <begin position="1"/>
        <end position="13"/>
    </location>
</feature>
<feature type="binding site" description="axial binding residue" evidence="3">
    <location>
        <position position="60"/>
    </location>
    <ligand>
        <name>chlorophyll b</name>
        <dbReference type="ChEBI" id="CHEBI:61721"/>
        <label>1</label>
    </ligand>
    <ligandPart>
        <name>Mg</name>
        <dbReference type="ChEBI" id="CHEBI:25107"/>
    </ligandPart>
</feature>
<feature type="binding site" evidence="1">
    <location>
        <position position="82"/>
    </location>
    <ligand>
        <name>chlorophyll a</name>
        <dbReference type="ChEBI" id="CHEBI:58416"/>
        <label>1</label>
    </ligand>
</feature>
<feature type="binding site" evidence="1">
    <location>
        <position position="88"/>
    </location>
    <ligand>
        <name>chlorophyll a</name>
        <dbReference type="ChEBI" id="CHEBI:58416"/>
        <label>1</label>
    </ligand>
</feature>
<feature type="binding site" description="axial binding residue" evidence="3">
    <location>
        <position position="101"/>
    </location>
    <ligand>
        <name>chlorophyll a</name>
        <dbReference type="ChEBI" id="CHEBI:58416"/>
        <label>1</label>
    </ligand>
    <ligandPart>
        <name>Mg</name>
        <dbReference type="ChEBI" id="CHEBI:25107"/>
    </ligandPart>
</feature>
<feature type="binding site" description="axial binding residue" evidence="3">
    <location>
        <position position="104"/>
    </location>
    <ligand>
        <name>chlorophyll a</name>
        <dbReference type="ChEBI" id="CHEBI:58416"/>
        <label>2</label>
    </ligand>
    <ligandPart>
        <name>Mg</name>
        <dbReference type="ChEBI" id="CHEBI:25107"/>
    </ligandPart>
</feature>
<feature type="binding site" evidence="1">
    <location>
        <position position="106"/>
    </location>
    <ligand>
        <name>chlorophyll b</name>
        <dbReference type="ChEBI" id="CHEBI:61721"/>
        <label>2</label>
    </ligand>
</feature>
<feature type="binding site" evidence="1">
    <location>
        <position position="139"/>
    </location>
    <ligand>
        <name>chlorophyll a</name>
        <dbReference type="ChEBI" id="CHEBI:58416"/>
        <label>3</label>
    </ligand>
</feature>
<feature type="binding site" evidence="1">
    <location>
        <position position="149"/>
    </location>
    <ligand>
        <name>chlorophyll a</name>
        <dbReference type="ChEBI" id="CHEBI:58416"/>
        <label>3</label>
    </ligand>
</feature>
<feature type="binding site" description="axial binding residue" evidence="3">
    <location>
        <position position="155"/>
    </location>
    <ligand>
        <name>chlorophyll b</name>
        <dbReference type="ChEBI" id="CHEBI:61721"/>
        <label>2</label>
    </ligand>
    <ligandPart>
        <name>Mg</name>
        <dbReference type="ChEBI" id="CHEBI:25107"/>
    </ligandPart>
</feature>
<feature type="binding site" evidence="1">
    <location>
        <position position="159"/>
    </location>
    <ligand>
        <name>chlorophyll b</name>
        <dbReference type="ChEBI" id="CHEBI:61721"/>
        <label>3</label>
    </ligand>
</feature>
<feature type="binding site" evidence="1">
    <location>
        <position position="167"/>
    </location>
    <ligand>
        <name>chlorophyll b</name>
        <dbReference type="ChEBI" id="CHEBI:61721"/>
        <label>4</label>
    </ligand>
</feature>
<feature type="binding site" evidence="2">
    <location>
        <position position="167"/>
    </location>
    <ligand>
        <name>chlorophyll b</name>
        <dbReference type="ChEBI" id="CHEBI:61721"/>
        <label>5</label>
    </ligand>
</feature>
<feature type="binding site" description="axial binding residue" evidence="3">
    <location>
        <position position="175"/>
    </location>
    <ligand>
        <name>chlorophyll b</name>
        <dbReference type="ChEBI" id="CHEBI:61721"/>
        <label>3</label>
    </ligand>
    <ligandPart>
        <name>Mg</name>
        <dbReference type="ChEBI" id="CHEBI:25107"/>
    </ligandPart>
</feature>
<feature type="binding site" evidence="1">
    <location>
        <position position="178"/>
    </location>
    <ligand>
        <name>chlorophyll b</name>
        <dbReference type="ChEBI" id="CHEBI:61721"/>
        <label>4</label>
    </ligand>
</feature>
<feature type="binding site" evidence="1">
    <location>
        <position position="184"/>
    </location>
    <ligand>
        <name>chlorophyll b</name>
        <dbReference type="ChEBI" id="CHEBI:61721"/>
        <label>2</label>
    </ligand>
</feature>
<feature type="binding site" evidence="1">
    <location>
        <position position="215"/>
    </location>
    <ligand>
        <name>chlorophyll a</name>
        <dbReference type="ChEBI" id="CHEBI:58416"/>
        <label>5</label>
    </ligand>
</feature>
<feature type="binding site" description="axial binding residue" evidence="3">
    <location>
        <position position="216"/>
    </location>
    <ligand>
        <name>chlorophyll a</name>
        <dbReference type="ChEBI" id="CHEBI:58416"/>
        <label>3</label>
    </ligand>
    <ligandPart>
        <name>Mg</name>
        <dbReference type="ChEBI" id="CHEBI:25107"/>
    </ligandPart>
</feature>
<feature type="binding site" description="axial binding residue" evidence="3">
    <location>
        <position position="219"/>
    </location>
    <ligand>
        <name>chlorophyll a</name>
        <dbReference type="ChEBI" id="CHEBI:58416"/>
        <label>4</label>
    </ligand>
    <ligandPart>
        <name>Mg</name>
        <dbReference type="ChEBI" id="CHEBI:25107"/>
    </ligandPart>
</feature>
<feature type="binding site" evidence="1">
    <location>
        <position position="221"/>
    </location>
    <ligand>
        <name>chlorophyll a</name>
        <dbReference type="ChEBI" id="CHEBI:58416"/>
        <label>1</label>
    </ligand>
</feature>
<feature type="binding site" description="axial binding residue" evidence="3">
    <location>
        <position position="233"/>
    </location>
    <ligand>
        <name>chlorophyll a</name>
        <dbReference type="ChEBI" id="CHEBI:58416"/>
        <label>5</label>
    </ligand>
    <ligandPart>
        <name>Mg</name>
        <dbReference type="ChEBI" id="CHEBI:25107"/>
    </ligandPart>
</feature>
<feature type="binding site" description="axial binding residue" evidence="3">
    <location>
        <position position="248"/>
    </location>
    <ligand>
        <name>chlorophyll a</name>
        <dbReference type="ChEBI" id="CHEBI:58416"/>
        <label>6</label>
    </ligand>
    <ligandPart>
        <name>Mg</name>
        <dbReference type="ChEBI" id="CHEBI:25107"/>
    </ligandPart>
</feature>
<feature type="binding site" evidence="1">
    <location>
        <position position="257"/>
    </location>
    <ligand>
        <name>chlorophyll a</name>
        <dbReference type="ChEBI" id="CHEBI:58416"/>
        <label>6</label>
    </ligand>
</feature>
<feature type="binding site" evidence="1">
    <location>
        <position position="264"/>
    </location>
    <ligand>
        <name>chlorophyll b</name>
        <dbReference type="ChEBI" id="CHEBI:61721"/>
        <label>5</label>
    </ligand>
</feature>
<feature type="modified residue" description="N2-acetylarginine" evidence="1">
    <location>
        <position position="37"/>
    </location>
</feature>
<feature type="sequence conflict" description="In Ref. 2; AAW31511." evidence="7" ref="2">
    <original>ETSA</original>
    <variation>KL</variation>
    <location>
        <begin position="19"/>
        <end position="22"/>
    </location>
</feature>
<feature type="sequence conflict" description="In Ref. 2; AAW31511." evidence="7" ref="2">
    <original>D</original>
    <variation>E</variation>
    <location>
        <position position="204"/>
    </location>
</feature>
<feature type="strand" evidence="8">
    <location>
        <begin position="51"/>
        <end position="54"/>
    </location>
</feature>
<feature type="helix" evidence="8">
    <location>
        <begin position="62"/>
        <end position="64"/>
    </location>
</feature>
<feature type="helix" evidence="8">
    <location>
        <begin position="93"/>
        <end position="123"/>
    </location>
</feature>
<feature type="helix" evidence="8">
    <location>
        <begin position="133"/>
        <end position="135"/>
    </location>
</feature>
<feature type="helix" evidence="8">
    <location>
        <begin position="138"/>
        <end position="141"/>
    </location>
</feature>
<feature type="strand" evidence="8">
    <location>
        <begin position="142"/>
        <end position="144"/>
    </location>
</feature>
<feature type="helix" evidence="8">
    <location>
        <begin position="148"/>
        <end position="150"/>
    </location>
</feature>
<feature type="helix" evidence="8">
    <location>
        <begin position="160"/>
        <end position="180"/>
    </location>
</feature>
<feature type="strand" evidence="8">
    <location>
        <begin position="188"/>
        <end position="191"/>
    </location>
</feature>
<feature type="helix" evidence="8">
    <location>
        <begin position="195"/>
        <end position="197"/>
    </location>
</feature>
<feature type="helix" evidence="8">
    <location>
        <begin position="206"/>
        <end position="237"/>
    </location>
</feature>
<feature type="helix" evidence="8">
    <location>
        <begin position="241"/>
        <end position="250"/>
    </location>
</feature>
<feature type="turn" evidence="8">
    <location>
        <begin position="252"/>
        <end position="254"/>
    </location>
</feature>
<feature type="helix" evidence="8">
    <location>
        <begin position="257"/>
        <end position="263"/>
    </location>
</feature>
<proteinExistence type="evidence at protein level"/>
<keyword id="KW-0002">3D-structure</keyword>
<keyword id="KW-0007">Acetylation</keyword>
<keyword id="KW-0148">Chlorophyll</keyword>
<keyword id="KW-0150">Chloroplast</keyword>
<keyword id="KW-0157">Chromophore</keyword>
<keyword id="KW-0903">Direct protein sequencing</keyword>
<keyword id="KW-0460">Magnesium</keyword>
<keyword id="KW-0472">Membrane</keyword>
<keyword id="KW-0479">Metal-binding</keyword>
<keyword id="KW-0597">Phosphoprotein</keyword>
<keyword id="KW-0602">Photosynthesis</keyword>
<keyword id="KW-0603">Photosystem I</keyword>
<keyword id="KW-0604">Photosystem II</keyword>
<keyword id="KW-0934">Plastid</keyword>
<keyword id="KW-0793">Thylakoid</keyword>
<keyword id="KW-0809">Transit peptide</keyword>
<keyword id="KW-0812">Transmembrane</keyword>
<keyword id="KW-1133">Transmembrane helix</keyword>
<comment type="function">
    <text evidence="6">The light-harvesting complex (LHC) functions as a light receptor, it captures and delivers excitation energy to photosystems with which it is closely associated.</text>
</comment>
<comment type="function">
    <text evidence="6">May channel protons produced in the catalytic Mn center of water oxidation into the thylakoid lumen.</text>
</comment>
<comment type="cofactor">
    <text evidence="1">Binds at least 14 chlorophylls (8 Chl-a and 6 Chl-b) and carotenoids such as lutein and neoxanthin.</text>
</comment>
<comment type="subunit">
    <text>The LHC complex consists of chlorophyll a-b binding proteins.</text>
</comment>
<comment type="interaction">
    <interactant intactId="EBI-8295162">
        <id>P27490</id>
    </interactant>
    <interactant intactId="EBI-1806831">
        <id>Q8LBP4</id>
        <label>ALB3</label>
    </interactant>
    <organismsDiffer>true</organismsDiffer>
    <experiments>2</experiments>
</comment>
<comment type="interaction">
    <interactant intactId="EBI-8295162">
        <id>P27490</id>
    </interactant>
    <interactant intactId="EBI-780656">
        <id>O22265</id>
        <label>CAO</label>
    </interactant>
    <organismsDiffer>true</organismsDiffer>
    <experiments>4</experiments>
</comment>
<comment type="subcellular location">
    <subcellularLocation>
        <location>Plastid</location>
        <location>Chloroplast thylakoid membrane</location>
        <topology>Multi-pass membrane protein</topology>
    </subcellularLocation>
</comment>
<comment type="domain">
    <text>The N-terminus of the protein extends into the stroma where it is involved with adhesion of granal membranes and post-translational modifications; both are believed to mediate the distribution of excitation energy between photosystems I and II.</text>
</comment>
<comment type="PTM">
    <text evidence="1">Photoregulated by reversible phosphorylation of its threonine residues.</text>
</comment>
<comment type="similarity">
    <text evidence="7">Belongs to the light-harvesting chlorophyll a/b-binding (LHC) protein family.</text>
</comment>
<sequence>MAASSMALSSPTLTGKPVETSANPSSQELGGARFTMRKSATTKKVASSGSPWYGPDRVKYLGPFSGESPSYLTGEFPGDYGWDTAGLSADPETFSKNRELEVIHSRWAMLGALGCVFPELLSRNGVKFGEAVWFKAGSQIFSEGGLDYLGNPSLVHAQSILAIWATQVILMGAVEGYRIAGGPLGEVVDPLYPGGSFDPLGLADDPEAFAELKVKELKNGRLAMFSMFGFFVQAIVTGKGPLENLADHLSDPVNNNAWSYATNFVPGK</sequence>
<protein>
    <recommendedName>
        <fullName>Chlorophyll a-b binding protein 8, chloroplastic</fullName>
    </recommendedName>
    <alternativeName>
        <fullName>LHCII type I CAB-8</fullName>
    </alternativeName>
</protein>
<reference key="1">
    <citation type="journal article" date="1991" name="Plant Mol. Biol.">
        <title>Nucleotide sequence of Cab-8, a new type I gene encoding a chlorophyll a/b-binding protein of LHC II in Pisum.</title>
        <authorList>
            <person name="Alexander L."/>
            <person name="Falconet D."/>
            <person name="Fristensky B.W."/>
            <person name="White M.J."/>
            <person name="Watson J.C."/>
            <person name="Roe B.A."/>
            <person name="Thompson W.F."/>
        </authorList>
    </citation>
    <scope>NUCLEOTIDE SEQUENCE [GENOMIC DNA]</scope>
</reference>
<reference key="2">
    <citation type="submission" date="2004-12" db="EMBL/GenBank/DDBJ databases">
        <authorList>
            <person name="Zhang Y."/>
        </authorList>
    </citation>
    <scope>NUCLEOTIDE SEQUENCE [MRNA]</scope>
</reference>
<reference key="3">
    <citation type="journal article" date="1990" name="Eur. J. Biochem.">
        <title>Dicyclohexylcarbodiimide-binding proteins related to the short circuit of the proton-pumping activity of photosystem II. Identified as light-harvesting chlorophyll-a/b-binding proteins.</title>
        <authorList>
            <person name="Jahns P."/>
            <person name="Junge W."/>
        </authorList>
    </citation>
    <scope>PROTEIN SEQUENCE OF 110-125</scope>
    <scope>FUNCTION</scope>
    <source>
        <tissue>Seedling</tissue>
    </source>
</reference>
<name>CB28_PEA</name>
<gene>
    <name type="primary">CAB8</name>
    <name type="synonym">LHCB1</name>
</gene>
<dbReference type="EMBL" id="X56538">
    <property type="protein sequence ID" value="CAA39883.1"/>
    <property type="molecule type" value="Genomic_DNA"/>
</dbReference>
<dbReference type="EMBL" id="AY845253">
    <property type="protein sequence ID" value="AAW31511.1"/>
    <property type="molecule type" value="mRNA"/>
</dbReference>
<dbReference type="PIR" id="S17429">
    <property type="entry name" value="CDPMI8"/>
</dbReference>
<dbReference type="PDB" id="5XNL">
    <property type="method" value="EM"/>
    <property type="resolution" value="2.70 A"/>
    <property type="chains" value="1/2/5/6/G/N/Y/g/n/y=37-268"/>
</dbReference>
<dbReference type="PDB" id="5XNM">
    <property type="method" value="EM"/>
    <property type="resolution" value="3.20 A"/>
    <property type="chains" value="1/2/5/6/G/N/Y/g/n/y=37-268"/>
</dbReference>
<dbReference type="PDB" id="5XNN">
    <property type="method" value="EM"/>
    <property type="resolution" value="3.60 A"/>
    <property type="chains" value="1/2=37-268"/>
</dbReference>
<dbReference type="PDB" id="5XNO">
    <property type="method" value="EM"/>
    <property type="resolution" value="3.50 A"/>
    <property type="chains" value="1/2=37-268"/>
</dbReference>
<dbReference type="PDB" id="6YP7">
    <property type="method" value="EM"/>
    <property type="resolution" value="3.80 A"/>
    <property type="chains" value="G/N/Y/g/n/y=49-267"/>
</dbReference>
<dbReference type="PDBsum" id="5XNL"/>
<dbReference type="PDBsum" id="5XNM"/>
<dbReference type="PDBsum" id="5XNN"/>
<dbReference type="PDBsum" id="5XNO"/>
<dbReference type="PDBsum" id="6YP7"/>
<dbReference type="EMDB" id="EMD-10865"/>
<dbReference type="EMDB" id="EMD-6741"/>
<dbReference type="EMDB" id="EMD-6742"/>
<dbReference type="EMDB" id="EMD-6743"/>
<dbReference type="EMDB" id="EMD-6744"/>
<dbReference type="SMR" id="P27490"/>
<dbReference type="IntAct" id="P27490">
    <property type="interactions" value="2"/>
</dbReference>
<dbReference type="MINT" id="P27490"/>
<dbReference type="GO" id="GO:0009535">
    <property type="term" value="C:chloroplast thylakoid membrane"/>
    <property type="evidence" value="ECO:0007669"/>
    <property type="project" value="UniProtKB-SubCell"/>
</dbReference>
<dbReference type="GO" id="GO:0009522">
    <property type="term" value="C:photosystem I"/>
    <property type="evidence" value="ECO:0007669"/>
    <property type="project" value="UniProtKB-KW"/>
</dbReference>
<dbReference type="GO" id="GO:0009523">
    <property type="term" value="C:photosystem II"/>
    <property type="evidence" value="ECO:0007669"/>
    <property type="project" value="UniProtKB-KW"/>
</dbReference>
<dbReference type="GO" id="GO:0016168">
    <property type="term" value="F:chlorophyll binding"/>
    <property type="evidence" value="ECO:0007669"/>
    <property type="project" value="UniProtKB-KW"/>
</dbReference>
<dbReference type="GO" id="GO:0046872">
    <property type="term" value="F:metal ion binding"/>
    <property type="evidence" value="ECO:0007669"/>
    <property type="project" value="UniProtKB-KW"/>
</dbReference>
<dbReference type="GO" id="GO:0009765">
    <property type="term" value="P:photosynthesis, light harvesting"/>
    <property type="evidence" value="ECO:0007669"/>
    <property type="project" value="InterPro"/>
</dbReference>
<dbReference type="FunFam" id="1.10.3460.10:FF:000001">
    <property type="entry name" value="Chlorophyll a-b binding protein, chloroplastic"/>
    <property type="match status" value="1"/>
</dbReference>
<dbReference type="Gene3D" id="1.10.3460.10">
    <property type="entry name" value="Chlorophyll a/b binding protein domain"/>
    <property type="match status" value="1"/>
</dbReference>
<dbReference type="InterPro" id="IPR001344">
    <property type="entry name" value="Chloro_AB-bd_pln"/>
</dbReference>
<dbReference type="InterPro" id="IPR022796">
    <property type="entry name" value="Chloroa_b-bind"/>
</dbReference>
<dbReference type="PANTHER" id="PTHR21649">
    <property type="entry name" value="CHLOROPHYLL A/B BINDING PROTEIN"/>
    <property type="match status" value="1"/>
</dbReference>
<dbReference type="Pfam" id="PF00504">
    <property type="entry name" value="Chloroa_b-bind"/>
    <property type="match status" value="1"/>
</dbReference>
<dbReference type="SUPFAM" id="SSF103511">
    <property type="entry name" value="Chlorophyll a-b binding protein"/>
    <property type="match status" value="1"/>
</dbReference>